<sequence>MRLLYGIRAHHDKIWSVSSHQKLPLLATGSSDKTSAIFRLSETEKFPRVTTLDDTHTRSIRSVMFKPPIDDTVVDENELLDPPTLAMGSFDAKLSVWQAELPQDNDEDMDQEPREIWKQERKVVERAAQWELMAVIEGHEHEVKAVAWNCHGSLVASCSRDKTIWIWETDPDTLEEFECISVLTEHQQDVKHVIWHPTQNLLASSSYDDTICIYRQEYDDDDWGCAAVLNGHQGTVWCSAFEHPKSPSASETTVRLVSASDDLTVRIWSTSKEGSETNHDALPSSIKSSNEMQWDQECILPSAHTYPVYSVVWSSVSGRIASAGADGKIAVYKQTDGVWEIEGVTSAAHGVHEINTLAWSKLDDNREVLVSGGDDGYVNVWE</sequence>
<organism>
    <name type="scientific">Meyerozyma guilliermondii (strain ATCC 6260 / CBS 566 / DSM 6381 / JCM 1539 / NBRC 10279 / NRRL Y-324)</name>
    <name type="common">Yeast</name>
    <name type="synonym">Candida guilliermondii</name>
    <dbReference type="NCBI Taxonomy" id="294746"/>
    <lineage>
        <taxon>Eukaryota</taxon>
        <taxon>Fungi</taxon>
        <taxon>Dikarya</taxon>
        <taxon>Ascomycota</taxon>
        <taxon>Saccharomycotina</taxon>
        <taxon>Pichiomycetes</taxon>
        <taxon>Debaryomycetaceae</taxon>
        <taxon>Meyerozyma</taxon>
    </lineage>
</organism>
<protein>
    <recommendedName>
        <fullName evidence="1">Probable cytosolic iron-sulfur protein assembly protein 1</fullName>
    </recommendedName>
</protein>
<comment type="function">
    <text evidence="1">Essential component of the cytosolic iron-sulfur (Fe/S) protein assembly machinery. Required for the maturation of extramitochondrial Fe/S proteins.</text>
</comment>
<comment type="subunit">
    <text evidence="1">Interacts with NAR1.</text>
</comment>
<comment type="subcellular location">
    <subcellularLocation>
        <location evidence="1">Cytoplasm</location>
    </subcellularLocation>
    <subcellularLocation>
        <location evidence="1">Nucleus</location>
    </subcellularLocation>
    <text evidence="1">Preferentially localized to the nucleus.</text>
</comment>
<comment type="similarity">
    <text evidence="1">Belongs to the WD repeat CIA1 family.</text>
</comment>
<proteinExistence type="inferred from homology"/>
<accession>A5DHD2</accession>
<gene>
    <name evidence="1" type="primary">CIA1</name>
    <name type="ORF">PGUG_02683</name>
</gene>
<name>CIAO1_PICGU</name>
<feature type="chain" id="PRO_0000382524" description="Probable cytosolic iron-sulfur protein assembly protein 1">
    <location>
        <begin position="1"/>
        <end position="382"/>
    </location>
</feature>
<feature type="repeat" description="WD 1">
    <location>
        <begin position="9"/>
        <end position="48"/>
    </location>
</feature>
<feature type="repeat" description="WD 2">
    <location>
        <begin position="55"/>
        <end position="107"/>
    </location>
</feature>
<feature type="repeat" description="WD 3">
    <location>
        <begin position="138"/>
        <end position="178"/>
    </location>
</feature>
<feature type="repeat" description="WD 4">
    <location>
        <begin position="185"/>
        <end position="224"/>
    </location>
</feature>
<feature type="repeat" description="WD 5">
    <location>
        <begin position="231"/>
        <end position="278"/>
    </location>
</feature>
<feature type="repeat" description="WD 6">
    <location>
        <begin position="303"/>
        <end position="342"/>
    </location>
</feature>
<feature type="repeat" description="WD 7">
    <location>
        <begin position="349"/>
        <end position="382"/>
    </location>
</feature>
<reference key="1">
    <citation type="journal article" date="2009" name="Nature">
        <title>Evolution of pathogenicity and sexual reproduction in eight Candida genomes.</title>
        <authorList>
            <person name="Butler G."/>
            <person name="Rasmussen M.D."/>
            <person name="Lin M.F."/>
            <person name="Santos M.A.S."/>
            <person name="Sakthikumar S."/>
            <person name="Munro C.A."/>
            <person name="Rheinbay E."/>
            <person name="Grabherr M."/>
            <person name="Forche A."/>
            <person name="Reedy J.L."/>
            <person name="Agrafioti I."/>
            <person name="Arnaud M.B."/>
            <person name="Bates S."/>
            <person name="Brown A.J.P."/>
            <person name="Brunke S."/>
            <person name="Costanzo M.C."/>
            <person name="Fitzpatrick D.A."/>
            <person name="de Groot P.W.J."/>
            <person name="Harris D."/>
            <person name="Hoyer L.L."/>
            <person name="Hube B."/>
            <person name="Klis F.M."/>
            <person name="Kodira C."/>
            <person name="Lennard N."/>
            <person name="Logue M.E."/>
            <person name="Martin R."/>
            <person name="Neiman A.M."/>
            <person name="Nikolaou E."/>
            <person name="Quail M.A."/>
            <person name="Quinn J."/>
            <person name="Santos M.C."/>
            <person name="Schmitzberger F.F."/>
            <person name="Sherlock G."/>
            <person name="Shah P."/>
            <person name="Silverstein K.A.T."/>
            <person name="Skrzypek M.S."/>
            <person name="Soll D."/>
            <person name="Staggs R."/>
            <person name="Stansfield I."/>
            <person name="Stumpf M.P.H."/>
            <person name="Sudbery P.E."/>
            <person name="Srikantha T."/>
            <person name="Zeng Q."/>
            <person name="Berman J."/>
            <person name="Berriman M."/>
            <person name="Heitman J."/>
            <person name="Gow N.A.R."/>
            <person name="Lorenz M.C."/>
            <person name="Birren B.W."/>
            <person name="Kellis M."/>
            <person name="Cuomo C.A."/>
        </authorList>
    </citation>
    <scope>NUCLEOTIDE SEQUENCE [LARGE SCALE GENOMIC DNA]</scope>
    <source>
        <strain>ATCC 6260 / CBS 566 / DSM 6381 / JCM 1539 / NBRC 10279 / NRRL Y-324</strain>
    </source>
</reference>
<dbReference type="EMBL" id="CH408157">
    <property type="protein sequence ID" value="EDK38585.2"/>
    <property type="molecule type" value="Genomic_DNA"/>
</dbReference>
<dbReference type="RefSeq" id="XP_001484954.1">
    <property type="nucleotide sequence ID" value="XM_001484904.1"/>
</dbReference>
<dbReference type="SMR" id="A5DHD2"/>
<dbReference type="FunCoup" id="A5DHD2">
    <property type="interactions" value="76"/>
</dbReference>
<dbReference type="STRING" id="294746.A5DHD2"/>
<dbReference type="GeneID" id="5127026"/>
<dbReference type="KEGG" id="pgu:PGUG_02683"/>
<dbReference type="VEuPathDB" id="FungiDB:PGUG_02683"/>
<dbReference type="eggNOG" id="KOG0645">
    <property type="taxonomic scope" value="Eukaryota"/>
</dbReference>
<dbReference type="HOGENOM" id="CLU_000288_57_8_1"/>
<dbReference type="InParanoid" id="A5DHD2"/>
<dbReference type="OMA" id="IREIRWS"/>
<dbReference type="OrthoDB" id="284782at2759"/>
<dbReference type="Proteomes" id="UP000001997">
    <property type="component" value="Unassembled WGS sequence"/>
</dbReference>
<dbReference type="GO" id="GO:0097361">
    <property type="term" value="C:cytosolic [4Fe-4S] assembly targeting complex"/>
    <property type="evidence" value="ECO:0007669"/>
    <property type="project" value="EnsemblFungi"/>
</dbReference>
<dbReference type="GO" id="GO:0005634">
    <property type="term" value="C:nucleus"/>
    <property type="evidence" value="ECO:0007669"/>
    <property type="project" value="UniProtKB-SubCell"/>
</dbReference>
<dbReference type="GO" id="GO:0016226">
    <property type="term" value="P:iron-sulfur cluster assembly"/>
    <property type="evidence" value="ECO:0007669"/>
    <property type="project" value="UniProtKB-UniRule"/>
</dbReference>
<dbReference type="GO" id="GO:0002098">
    <property type="term" value="P:tRNA wobble uridine modification"/>
    <property type="evidence" value="ECO:0007669"/>
    <property type="project" value="EnsemblFungi"/>
</dbReference>
<dbReference type="Gene3D" id="2.130.10.10">
    <property type="entry name" value="YVTN repeat-like/Quinoprotein amine dehydrogenase"/>
    <property type="match status" value="1"/>
</dbReference>
<dbReference type="HAMAP" id="MF_03037">
    <property type="entry name" value="ciao1"/>
    <property type="match status" value="1"/>
</dbReference>
<dbReference type="InterPro" id="IPR028608">
    <property type="entry name" value="CIAO1/Cia1"/>
</dbReference>
<dbReference type="InterPro" id="IPR020472">
    <property type="entry name" value="G-protein_beta_WD-40_rep"/>
</dbReference>
<dbReference type="InterPro" id="IPR015943">
    <property type="entry name" value="WD40/YVTN_repeat-like_dom_sf"/>
</dbReference>
<dbReference type="InterPro" id="IPR036322">
    <property type="entry name" value="WD40_repeat_dom_sf"/>
</dbReference>
<dbReference type="InterPro" id="IPR001680">
    <property type="entry name" value="WD40_rpt"/>
</dbReference>
<dbReference type="PANTHER" id="PTHR19920:SF0">
    <property type="entry name" value="CYTOSOLIC IRON-SULFUR PROTEIN ASSEMBLY PROTEIN CIAO1-RELATED"/>
    <property type="match status" value="1"/>
</dbReference>
<dbReference type="PANTHER" id="PTHR19920">
    <property type="entry name" value="WD40 PROTEIN CIAO1"/>
    <property type="match status" value="1"/>
</dbReference>
<dbReference type="Pfam" id="PF00400">
    <property type="entry name" value="WD40"/>
    <property type="match status" value="6"/>
</dbReference>
<dbReference type="PRINTS" id="PR00320">
    <property type="entry name" value="GPROTEINBRPT"/>
</dbReference>
<dbReference type="SMART" id="SM00320">
    <property type="entry name" value="WD40"/>
    <property type="match status" value="7"/>
</dbReference>
<dbReference type="SUPFAM" id="SSF50978">
    <property type="entry name" value="WD40 repeat-like"/>
    <property type="match status" value="1"/>
</dbReference>
<dbReference type="PROSITE" id="PS00678">
    <property type="entry name" value="WD_REPEATS_1"/>
    <property type="match status" value="1"/>
</dbReference>
<dbReference type="PROSITE" id="PS50082">
    <property type="entry name" value="WD_REPEATS_2"/>
    <property type="match status" value="3"/>
</dbReference>
<dbReference type="PROSITE" id="PS50294">
    <property type="entry name" value="WD_REPEATS_REGION"/>
    <property type="match status" value="1"/>
</dbReference>
<keyword id="KW-0963">Cytoplasm</keyword>
<keyword id="KW-0539">Nucleus</keyword>
<keyword id="KW-1185">Reference proteome</keyword>
<keyword id="KW-0677">Repeat</keyword>
<keyword id="KW-0853">WD repeat</keyword>
<evidence type="ECO:0000255" key="1">
    <source>
        <dbReference type="HAMAP-Rule" id="MF_03037"/>
    </source>
</evidence>